<proteinExistence type="inferred from homology"/>
<gene>
    <name evidence="1" type="primary">groEL</name>
    <name evidence="1" type="synonym">groL</name>
    <name type="ordered locus">TW327</name>
</gene>
<dbReference type="EC" id="5.6.1.7" evidence="1"/>
<dbReference type="EMBL" id="BX251411">
    <property type="protein sequence ID" value="CAD66999.1"/>
    <property type="molecule type" value="Genomic_DNA"/>
</dbReference>
<dbReference type="RefSeq" id="WP_011096279.1">
    <property type="nucleotide sequence ID" value="NC_004551.1"/>
</dbReference>
<dbReference type="SMR" id="Q83NN0"/>
<dbReference type="GeneID" id="67388100"/>
<dbReference type="KEGG" id="tws:TW327"/>
<dbReference type="HOGENOM" id="CLU_016503_3_0_11"/>
<dbReference type="GO" id="GO:0005737">
    <property type="term" value="C:cytoplasm"/>
    <property type="evidence" value="ECO:0007669"/>
    <property type="project" value="UniProtKB-SubCell"/>
</dbReference>
<dbReference type="GO" id="GO:0005524">
    <property type="term" value="F:ATP binding"/>
    <property type="evidence" value="ECO:0007669"/>
    <property type="project" value="UniProtKB-UniRule"/>
</dbReference>
<dbReference type="GO" id="GO:0140662">
    <property type="term" value="F:ATP-dependent protein folding chaperone"/>
    <property type="evidence" value="ECO:0007669"/>
    <property type="project" value="InterPro"/>
</dbReference>
<dbReference type="GO" id="GO:0016853">
    <property type="term" value="F:isomerase activity"/>
    <property type="evidence" value="ECO:0007669"/>
    <property type="project" value="UniProtKB-KW"/>
</dbReference>
<dbReference type="GO" id="GO:0051082">
    <property type="term" value="F:unfolded protein binding"/>
    <property type="evidence" value="ECO:0007669"/>
    <property type="project" value="UniProtKB-UniRule"/>
</dbReference>
<dbReference type="GO" id="GO:0042026">
    <property type="term" value="P:protein refolding"/>
    <property type="evidence" value="ECO:0007669"/>
    <property type="project" value="UniProtKB-UniRule"/>
</dbReference>
<dbReference type="CDD" id="cd03344">
    <property type="entry name" value="GroEL"/>
    <property type="match status" value="1"/>
</dbReference>
<dbReference type="FunFam" id="3.50.7.10:FF:000001">
    <property type="entry name" value="60 kDa chaperonin"/>
    <property type="match status" value="1"/>
</dbReference>
<dbReference type="Gene3D" id="3.50.7.10">
    <property type="entry name" value="GroEL"/>
    <property type="match status" value="1"/>
</dbReference>
<dbReference type="Gene3D" id="1.10.560.10">
    <property type="entry name" value="GroEL-like equatorial domain"/>
    <property type="match status" value="1"/>
</dbReference>
<dbReference type="Gene3D" id="3.30.260.10">
    <property type="entry name" value="TCP-1-like chaperonin intermediate domain"/>
    <property type="match status" value="1"/>
</dbReference>
<dbReference type="HAMAP" id="MF_00600">
    <property type="entry name" value="CH60"/>
    <property type="match status" value="1"/>
</dbReference>
<dbReference type="InterPro" id="IPR018370">
    <property type="entry name" value="Chaperonin_Cpn60_CS"/>
</dbReference>
<dbReference type="InterPro" id="IPR001844">
    <property type="entry name" value="Cpn60/GroEL"/>
</dbReference>
<dbReference type="InterPro" id="IPR002423">
    <property type="entry name" value="Cpn60/GroEL/TCP-1"/>
</dbReference>
<dbReference type="InterPro" id="IPR027409">
    <property type="entry name" value="GroEL-like_apical_dom_sf"/>
</dbReference>
<dbReference type="InterPro" id="IPR027413">
    <property type="entry name" value="GROEL-like_equatorial_sf"/>
</dbReference>
<dbReference type="InterPro" id="IPR027410">
    <property type="entry name" value="TCP-1-like_intermed_sf"/>
</dbReference>
<dbReference type="NCBIfam" id="TIGR02348">
    <property type="entry name" value="GroEL"/>
    <property type="match status" value="1"/>
</dbReference>
<dbReference type="NCBIfam" id="NF000592">
    <property type="entry name" value="PRK00013.1"/>
    <property type="match status" value="1"/>
</dbReference>
<dbReference type="NCBIfam" id="NF009487">
    <property type="entry name" value="PRK12849.1"/>
    <property type="match status" value="1"/>
</dbReference>
<dbReference type="NCBIfam" id="NF009488">
    <property type="entry name" value="PRK12850.1"/>
    <property type="match status" value="1"/>
</dbReference>
<dbReference type="NCBIfam" id="NF009489">
    <property type="entry name" value="PRK12851.1"/>
    <property type="match status" value="1"/>
</dbReference>
<dbReference type="PANTHER" id="PTHR45633">
    <property type="entry name" value="60 KDA HEAT SHOCK PROTEIN, MITOCHONDRIAL"/>
    <property type="match status" value="1"/>
</dbReference>
<dbReference type="Pfam" id="PF00118">
    <property type="entry name" value="Cpn60_TCP1"/>
    <property type="match status" value="1"/>
</dbReference>
<dbReference type="PRINTS" id="PR00298">
    <property type="entry name" value="CHAPERONIN60"/>
</dbReference>
<dbReference type="SUPFAM" id="SSF52029">
    <property type="entry name" value="GroEL apical domain-like"/>
    <property type="match status" value="1"/>
</dbReference>
<dbReference type="SUPFAM" id="SSF48592">
    <property type="entry name" value="GroEL equatorial domain-like"/>
    <property type="match status" value="1"/>
</dbReference>
<dbReference type="SUPFAM" id="SSF54849">
    <property type="entry name" value="GroEL-intermediate domain like"/>
    <property type="match status" value="1"/>
</dbReference>
<dbReference type="PROSITE" id="PS00296">
    <property type="entry name" value="CHAPERONINS_CPN60"/>
    <property type="match status" value="1"/>
</dbReference>
<accession>Q83NN0</accession>
<protein>
    <recommendedName>
        <fullName evidence="1">Chaperonin GroEL</fullName>
        <ecNumber evidence="1">5.6.1.7</ecNumber>
    </recommendedName>
    <alternativeName>
        <fullName evidence="1">60 kDa chaperonin</fullName>
    </alternativeName>
    <alternativeName>
        <fullName evidence="1">Chaperonin-60</fullName>
        <shortName evidence="1">Cpn60</shortName>
    </alternativeName>
</protein>
<keyword id="KW-0067">ATP-binding</keyword>
<keyword id="KW-0143">Chaperone</keyword>
<keyword id="KW-0963">Cytoplasm</keyword>
<keyword id="KW-0413">Isomerase</keyword>
<keyword id="KW-0547">Nucleotide-binding</keyword>
<comment type="function">
    <text evidence="1">Together with its co-chaperonin GroES, plays an essential role in assisting protein folding. The GroEL-GroES system forms a nano-cage that allows encapsulation of the non-native substrate proteins and provides a physical environment optimized to promote and accelerate protein folding.</text>
</comment>
<comment type="catalytic activity">
    <reaction evidence="1">
        <text>ATP + H2O + a folded polypeptide = ADP + phosphate + an unfolded polypeptide.</text>
        <dbReference type="EC" id="5.6.1.7"/>
    </reaction>
</comment>
<comment type="subunit">
    <text evidence="1">Forms a cylinder of 14 subunits composed of two heptameric rings stacked back-to-back. Interacts with the co-chaperonin GroES.</text>
</comment>
<comment type="subcellular location">
    <subcellularLocation>
        <location evidence="1">Cytoplasm</location>
    </subcellularLocation>
</comment>
<comment type="similarity">
    <text evidence="1">Belongs to the chaperonin (HSP60) family.</text>
</comment>
<sequence>MAKKITFNEDARRGLERGLNTLADTVKVTLGPRGRNVVLEKKWGAPVITNDGVTIAKEIELDDPYEKIGAELVKEVAKKTDDVAGDGTTTSVVLAQAMVREGLKNVAAGADPISLRRGIEKSVAAVSKALLTSAKEVETEAEIAACASISAGDPQIGDIIAQALEKVGKEGVVTVEESNTFGTELEITEGMRFDKGYLSAYFVTDAERQETVFENPYILICDSKISSVKDLLPVVDKVIQSGKQLLIIAEDVDGEALATLVVNKIRGIFKSVAVKAPGFGDRRKMMLQDIAVLTGGQVISEEVGLKLENATLDLLGCARKVVVSKDETTIVDGAGSSDQIAGRVSQIRKELENSDSDYDREKLQERLAKLSGGVAVIRSGAATEVELKERKHRIEDAVRNAKAAVEEGIVAGGGAALLQSGTSALKDLQLTSEEAVGRNIVRSAIEAPLRQISLNAGLEPGVVVGKVSSLPQGHGLDASTGEYVDMLSRGISDPVKVTRSALENAASIAGLFLTTEAVVAEKPEPKPAPGPADPGAGMDF</sequence>
<evidence type="ECO:0000255" key="1">
    <source>
        <dbReference type="HAMAP-Rule" id="MF_00600"/>
    </source>
</evidence>
<evidence type="ECO:0000256" key="2">
    <source>
        <dbReference type="SAM" id="MobiDB-lite"/>
    </source>
</evidence>
<name>CH60_TROW8</name>
<reference key="1">
    <citation type="journal article" date="2003" name="Lancet">
        <title>Sequencing and analysis of the genome of the Whipple's disease bacterium Tropheryma whipplei.</title>
        <authorList>
            <person name="Bentley S.D."/>
            <person name="Maiwald M."/>
            <person name="Murphy L.D."/>
            <person name="Pallen M.J."/>
            <person name="Yeats C.A."/>
            <person name="Dover L.G."/>
            <person name="Norbertczak H.T."/>
            <person name="Besra G.S."/>
            <person name="Quail M.A."/>
            <person name="Harris D.E."/>
            <person name="von Herbay A."/>
            <person name="Goble A."/>
            <person name="Rutter S."/>
            <person name="Squares R."/>
            <person name="Squares S."/>
            <person name="Barrell B.G."/>
            <person name="Parkhill J."/>
            <person name="Relman D.A."/>
        </authorList>
    </citation>
    <scope>NUCLEOTIDE SEQUENCE [LARGE SCALE GENOMIC DNA]</scope>
    <source>
        <strain>TW08/27</strain>
    </source>
</reference>
<feature type="chain" id="PRO_0000063590" description="Chaperonin GroEL">
    <location>
        <begin position="1"/>
        <end position="540"/>
    </location>
</feature>
<feature type="region of interest" description="Disordered" evidence="2">
    <location>
        <begin position="520"/>
        <end position="540"/>
    </location>
</feature>
<feature type="binding site" evidence="1">
    <location>
        <begin position="29"/>
        <end position="32"/>
    </location>
    <ligand>
        <name>ATP</name>
        <dbReference type="ChEBI" id="CHEBI:30616"/>
    </ligand>
</feature>
<feature type="binding site" evidence="1">
    <location>
        <begin position="86"/>
        <end position="90"/>
    </location>
    <ligand>
        <name>ATP</name>
        <dbReference type="ChEBI" id="CHEBI:30616"/>
    </ligand>
</feature>
<feature type="binding site" evidence="1">
    <location>
        <position position="413"/>
    </location>
    <ligand>
        <name>ATP</name>
        <dbReference type="ChEBI" id="CHEBI:30616"/>
    </ligand>
</feature>
<feature type="binding site" evidence="1">
    <location>
        <position position="493"/>
    </location>
    <ligand>
        <name>ATP</name>
        <dbReference type="ChEBI" id="CHEBI:30616"/>
    </ligand>
</feature>
<organism>
    <name type="scientific">Tropheryma whipplei (strain TW08/27)</name>
    <name type="common">Whipple's bacillus</name>
    <dbReference type="NCBI Taxonomy" id="218496"/>
    <lineage>
        <taxon>Bacteria</taxon>
        <taxon>Bacillati</taxon>
        <taxon>Actinomycetota</taxon>
        <taxon>Actinomycetes</taxon>
        <taxon>Micrococcales</taxon>
        <taxon>Tropherymataceae</taxon>
        <taxon>Tropheryma</taxon>
    </lineage>
</organism>